<comment type="similarity">
    <text evidence="1">Belongs to the UPF0246 family.</text>
</comment>
<sequence length="258" mass="29600">MLILISPAKTLDYQSPLTTTRYTLPELLDNSQQLIHEARKLTPPQISTLMRISDKLAGINAARFHDWQPDFTPENARQAILAFKGDVYTGLQAETFSEDDFDFAQQHLRMLSGLYGVLRPLDLMQPYRLEMGIRLENARGKDLYQFWGDIITNKLNEALAAQGDNVVINLASDEYFKSVKPKKLNAEIIKPVFLDEKNGKFKIISFYAKKARGLMSRFIIENRLTKPEQLTGFNSEGYFFDEASSSNGELVFKRYEQR</sequence>
<protein>
    <recommendedName>
        <fullName evidence="1">UPF0246 protein YaaA</fullName>
    </recommendedName>
</protein>
<gene>
    <name evidence="1" type="primary">yaaA</name>
    <name type="ordered locus">EcHS_A0007</name>
</gene>
<reference key="1">
    <citation type="journal article" date="2008" name="J. Bacteriol.">
        <title>The pangenome structure of Escherichia coli: comparative genomic analysis of E. coli commensal and pathogenic isolates.</title>
        <authorList>
            <person name="Rasko D.A."/>
            <person name="Rosovitz M.J."/>
            <person name="Myers G.S.A."/>
            <person name="Mongodin E.F."/>
            <person name="Fricke W.F."/>
            <person name="Gajer P."/>
            <person name="Crabtree J."/>
            <person name="Sebaihia M."/>
            <person name="Thomson N.R."/>
            <person name="Chaudhuri R."/>
            <person name="Henderson I.R."/>
            <person name="Sperandio V."/>
            <person name="Ravel J."/>
        </authorList>
    </citation>
    <scope>NUCLEOTIDE SEQUENCE [LARGE SCALE GENOMIC DNA]</scope>
    <source>
        <strain>HS</strain>
    </source>
</reference>
<name>YAAA_ECOHS</name>
<dbReference type="EMBL" id="CP000802">
    <property type="protein sequence ID" value="ABV04408.1"/>
    <property type="molecule type" value="Genomic_DNA"/>
</dbReference>
<dbReference type="RefSeq" id="WP_000906203.1">
    <property type="nucleotide sequence ID" value="NC_009800.1"/>
</dbReference>
<dbReference type="SMR" id="A7ZVU9"/>
<dbReference type="GeneID" id="75169905"/>
<dbReference type="KEGG" id="ecx:EcHS_A0007"/>
<dbReference type="HOGENOM" id="CLU_061989_0_0_6"/>
<dbReference type="GO" id="GO:0005829">
    <property type="term" value="C:cytosol"/>
    <property type="evidence" value="ECO:0007669"/>
    <property type="project" value="TreeGrafter"/>
</dbReference>
<dbReference type="GO" id="GO:0033194">
    <property type="term" value="P:response to hydroperoxide"/>
    <property type="evidence" value="ECO:0007669"/>
    <property type="project" value="TreeGrafter"/>
</dbReference>
<dbReference type="HAMAP" id="MF_00652">
    <property type="entry name" value="UPF0246"/>
    <property type="match status" value="1"/>
</dbReference>
<dbReference type="InterPro" id="IPR005583">
    <property type="entry name" value="YaaA"/>
</dbReference>
<dbReference type="NCBIfam" id="NF002541">
    <property type="entry name" value="PRK02101.1-1"/>
    <property type="match status" value="1"/>
</dbReference>
<dbReference type="NCBIfam" id="NF002542">
    <property type="entry name" value="PRK02101.1-3"/>
    <property type="match status" value="1"/>
</dbReference>
<dbReference type="PANTHER" id="PTHR30283:SF4">
    <property type="entry name" value="PEROXIDE STRESS RESISTANCE PROTEIN YAAA"/>
    <property type="match status" value="1"/>
</dbReference>
<dbReference type="PANTHER" id="PTHR30283">
    <property type="entry name" value="PEROXIDE STRESS RESPONSE PROTEIN YAAA"/>
    <property type="match status" value="1"/>
</dbReference>
<dbReference type="Pfam" id="PF03883">
    <property type="entry name" value="H2O2_YaaD"/>
    <property type="match status" value="1"/>
</dbReference>
<accession>A7ZVU9</accession>
<proteinExistence type="inferred from homology"/>
<organism>
    <name type="scientific">Escherichia coli O9:H4 (strain HS)</name>
    <dbReference type="NCBI Taxonomy" id="331112"/>
    <lineage>
        <taxon>Bacteria</taxon>
        <taxon>Pseudomonadati</taxon>
        <taxon>Pseudomonadota</taxon>
        <taxon>Gammaproteobacteria</taxon>
        <taxon>Enterobacterales</taxon>
        <taxon>Enterobacteriaceae</taxon>
        <taxon>Escherichia</taxon>
    </lineage>
</organism>
<feature type="chain" id="PRO_1000061598" description="UPF0246 protein YaaA">
    <location>
        <begin position="1"/>
        <end position="258"/>
    </location>
</feature>
<evidence type="ECO:0000255" key="1">
    <source>
        <dbReference type="HAMAP-Rule" id="MF_00652"/>
    </source>
</evidence>